<accession>Q51881</accession>
<evidence type="ECO:0000250" key="1">
    <source>
        <dbReference type="UniProtKB" id="P38044"/>
    </source>
</evidence>
<evidence type="ECO:0000255" key="2"/>
<evidence type="ECO:0000255" key="3">
    <source>
        <dbReference type="PROSITE-ProRule" id="PRU00441"/>
    </source>
</evidence>
<evidence type="ECO:0000303" key="4">
    <source>
    </source>
</evidence>
<evidence type="ECO:0000305" key="5"/>
<keyword id="KW-0997">Cell inner membrane</keyword>
<keyword id="KW-1003">Cell membrane</keyword>
<keyword id="KW-0406">Ion transport</keyword>
<keyword id="KW-0472">Membrane</keyword>
<keyword id="KW-0534">Nitrate assimilation</keyword>
<keyword id="KW-0812">Transmembrane</keyword>
<keyword id="KW-1133">Transmembrane helix</keyword>
<keyword id="KW-0813">Transport</keyword>
<proteinExistence type="inferred from homology"/>
<reference key="1">
    <citation type="journal article" date="1995" name="Plant Mol. Biol.">
        <title>Cloning and sequencing of the nitrate transport system from the thermophilic, filamentous cyanobacterium Phormidium laminosum: comparative analysis with the homologous system from Synechococcus sp. PCC 7942.</title>
        <authorList>
            <person name="Merchan F."/>
            <person name="Kindle K.L."/>
            <person name="Llama M.J."/>
            <person name="Serra J.L."/>
            <person name="Fernandez E."/>
        </authorList>
    </citation>
    <scope>NUCLEOTIDE SEQUENCE [GENOMIC DNA]</scope>
    <source>
        <strain>OH-1-P-CL1</strain>
    </source>
</reference>
<comment type="function">
    <text evidence="1">Part of the ABC transporter complex NrtABCD involved in nitrate uptake. The complex is probably also involved in nitrite transport. Probably responsible for the translocation of the substrate across the membrane.</text>
</comment>
<comment type="subunit">
    <text evidence="1">The complex is composed of two ATP-binding proteins (NrtC and NrtD), two transmembrane proteins (NrtB) and a solute-binding protein (NrtA).</text>
</comment>
<comment type="subcellular location">
    <subcellularLocation>
        <location evidence="1">Cell inner membrane</location>
        <topology evidence="2">Multi-pass membrane protein</topology>
    </subcellularLocation>
</comment>
<comment type="similarity">
    <text evidence="5">Belongs to the binding-protein-dependent transport system permease family. CysTW subfamily.</text>
</comment>
<feature type="chain" id="PRO_0000060125" description="Nitrate import permease protein NrtB">
    <location>
        <begin position="1"/>
        <end position="279"/>
    </location>
</feature>
<feature type="transmembrane region" description="Helical" evidence="2">
    <location>
        <begin position="98"/>
        <end position="118"/>
    </location>
</feature>
<feature type="transmembrane region" description="Helical" evidence="2">
    <location>
        <begin position="124"/>
        <end position="144"/>
    </location>
</feature>
<feature type="transmembrane region" description="Helical" evidence="2">
    <location>
        <begin position="151"/>
        <end position="171"/>
    </location>
</feature>
<feature type="transmembrane region" description="Helical" evidence="2">
    <location>
        <begin position="196"/>
        <end position="216"/>
    </location>
</feature>
<feature type="transmembrane region" description="Helical" evidence="2">
    <location>
        <begin position="217"/>
        <end position="237"/>
    </location>
</feature>
<feature type="transmembrane region" description="Helical" evidence="2">
    <location>
        <begin position="249"/>
        <end position="269"/>
    </location>
</feature>
<feature type="domain" description="ABC transmembrane type-1" evidence="3">
    <location>
        <begin position="86"/>
        <end position="270"/>
    </location>
</feature>
<protein>
    <recommendedName>
        <fullName evidence="5">Nitrate import permease protein NrtB</fullName>
    </recommendedName>
</protein>
<gene>
    <name evidence="4" type="primary">nrtB</name>
</gene>
<name>NRTB_LEPLM</name>
<sequence length="279" mass="30205">MTADLSSPRRARRSPSSYLGALVGKTIRRSIPTAIAFFVLLGIWQLLCSGENAACRPIQVVQESWDLIIDPFYRGSGTDQGLFWQIAASLQRVAVGYLMAAIAGIALGILIGVSVLMFQALDPIFQVLRTVPPLAWLPISLAAFRDSQPAAIFVIFITAIWPIIINTAVGVQNIPQDYNNVARVLKLSRLDYFLKVLLPATVPYIFTGLKIAIGLSWLAIVAAEMLTGGVGIGFFIWDAYNSGSNSEVILAIIYVGLVGLLLNALVGFIASRVVPDEQK</sequence>
<organism>
    <name type="scientific">Leptolyngbya laminosa</name>
    <name type="common">Phormidium laminosum</name>
    <dbReference type="NCBI Taxonomy" id="477181"/>
    <lineage>
        <taxon>Bacteria</taxon>
        <taxon>Bacillati</taxon>
        <taxon>Cyanobacteriota</taxon>
        <taxon>Cyanophyceae</taxon>
        <taxon>Leptolyngbyales</taxon>
        <taxon>Leptolyngbyaceae</taxon>
        <taxon>Leptolyngbya group</taxon>
        <taxon>Leptolyngbya</taxon>
    </lineage>
</organism>
<dbReference type="EMBL" id="Z19598">
    <property type="protein sequence ID" value="CAA79657.1"/>
    <property type="molecule type" value="Genomic_DNA"/>
</dbReference>
<dbReference type="PIR" id="S56642">
    <property type="entry name" value="S56642"/>
</dbReference>
<dbReference type="SMR" id="Q51881"/>
<dbReference type="GO" id="GO:0005886">
    <property type="term" value="C:plasma membrane"/>
    <property type="evidence" value="ECO:0007669"/>
    <property type="project" value="UniProtKB-SubCell"/>
</dbReference>
<dbReference type="GO" id="GO:0015112">
    <property type="term" value="F:nitrate transmembrane transporter activity"/>
    <property type="evidence" value="ECO:0007669"/>
    <property type="project" value="InterPro"/>
</dbReference>
<dbReference type="GO" id="GO:0006811">
    <property type="term" value="P:monoatomic ion transport"/>
    <property type="evidence" value="ECO:0007669"/>
    <property type="project" value="UniProtKB-KW"/>
</dbReference>
<dbReference type="GO" id="GO:0042128">
    <property type="term" value="P:nitrate assimilation"/>
    <property type="evidence" value="ECO:0007669"/>
    <property type="project" value="UniProtKB-KW"/>
</dbReference>
<dbReference type="CDD" id="cd06261">
    <property type="entry name" value="TM_PBP2"/>
    <property type="match status" value="1"/>
</dbReference>
<dbReference type="FunFam" id="1.10.3720.10:FF:000003">
    <property type="entry name" value="Aliphatic sulfonate ABC transporter permease"/>
    <property type="match status" value="1"/>
</dbReference>
<dbReference type="Gene3D" id="1.10.3720.10">
    <property type="entry name" value="MetI-like"/>
    <property type="match status" value="1"/>
</dbReference>
<dbReference type="InterPro" id="IPR000515">
    <property type="entry name" value="MetI-like"/>
</dbReference>
<dbReference type="InterPro" id="IPR035906">
    <property type="entry name" value="MetI-like_sf"/>
</dbReference>
<dbReference type="InterPro" id="IPR005889">
    <property type="entry name" value="NtrB"/>
</dbReference>
<dbReference type="NCBIfam" id="TIGR01183">
    <property type="entry name" value="ntrB"/>
    <property type="match status" value="1"/>
</dbReference>
<dbReference type="PANTHER" id="PTHR30151">
    <property type="entry name" value="ALKANE SULFONATE ABC TRANSPORTER-RELATED, MEMBRANE SUBUNIT"/>
    <property type="match status" value="1"/>
</dbReference>
<dbReference type="PANTHER" id="PTHR30151:SF7">
    <property type="entry name" value="NITRATE IMPORT PERMEASE PROTEIN NRTB"/>
    <property type="match status" value="1"/>
</dbReference>
<dbReference type="Pfam" id="PF00528">
    <property type="entry name" value="BPD_transp_1"/>
    <property type="match status" value="1"/>
</dbReference>
<dbReference type="SUPFAM" id="SSF161098">
    <property type="entry name" value="MetI-like"/>
    <property type="match status" value="1"/>
</dbReference>
<dbReference type="PROSITE" id="PS50928">
    <property type="entry name" value="ABC_TM1"/>
    <property type="match status" value="1"/>
</dbReference>